<organism>
    <name type="scientific">Oryza sativa subsp. japonica</name>
    <name type="common">Rice</name>
    <dbReference type="NCBI Taxonomy" id="39947"/>
    <lineage>
        <taxon>Eukaryota</taxon>
        <taxon>Viridiplantae</taxon>
        <taxon>Streptophyta</taxon>
        <taxon>Embryophyta</taxon>
        <taxon>Tracheophyta</taxon>
        <taxon>Spermatophyta</taxon>
        <taxon>Magnoliopsida</taxon>
        <taxon>Liliopsida</taxon>
        <taxon>Poales</taxon>
        <taxon>Poaceae</taxon>
        <taxon>BOP clade</taxon>
        <taxon>Oryzoideae</taxon>
        <taxon>Oryzeae</taxon>
        <taxon>Oryzinae</taxon>
        <taxon>Oryza</taxon>
        <taxon>Oryza sativa</taxon>
    </lineage>
</organism>
<comment type="function">
    <text evidence="1">High-affinity potassium transporter.</text>
</comment>
<comment type="subcellular location">
    <subcellularLocation>
        <location evidence="3">Membrane</location>
        <topology evidence="3">Multi-pass membrane protein</topology>
    </subcellularLocation>
</comment>
<comment type="similarity">
    <text evidence="3">Belongs to the HAK/KUP transporter (TC 2.A.72.3) family.</text>
</comment>
<gene>
    <name type="primary">HAK27</name>
    <name type="ordered locus">Os03g0574900</name>
    <name type="ordered locus">LOC_Os03g37830</name>
    <name type="ORF">OSJNBa0029P07.16</name>
</gene>
<feature type="chain" id="PRO_0000379542" description="Potassium transporter 27">
    <location>
        <begin position="1"/>
        <end position="811"/>
    </location>
</feature>
<feature type="topological domain" description="Cytoplasmic" evidence="2">
    <location>
        <begin position="1"/>
        <end position="64"/>
    </location>
</feature>
<feature type="transmembrane region" description="Helical; Name=1" evidence="2">
    <location>
        <begin position="65"/>
        <end position="85"/>
    </location>
</feature>
<feature type="topological domain" description="Extracellular" evidence="2">
    <location>
        <begin position="86"/>
        <end position="102"/>
    </location>
</feature>
<feature type="transmembrane region" description="Helical; Name=2" evidence="2">
    <location>
        <begin position="103"/>
        <end position="123"/>
    </location>
</feature>
<feature type="topological domain" description="Cytoplasmic" evidence="2">
    <location>
        <begin position="124"/>
        <end position="188"/>
    </location>
</feature>
<feature type="transmembrane region" description="Helical; Name=3" evidence="2">
    <location>
        <begin position="189"/>
        <end position="209"/>
    </location>
</feature>
<feature type="topological domain" description="Extracellular" evidence="2">
    <location>
        <begin position="210"/>
        <end position="226"/>
    </location>
</feature>
<feature type="transmembrane region" description="Helical; Name=4" evidence="2">
    <location>
        <begin position="227"/>
        <end position="247"/>
    </location>
</feature>
<feature type="topological domain" description="Cytoplasmic" evidence="2">
    <location>
        <begin position="248"/>
        <end position="254"/>
    </location>
</feature>
<feature type="transmembrane region" description="Helical; Name=5" evidence="2">
    <location>
        <begin position="255"/>
        <end position="275"/>
    </location>
</feature>
<feature type="topological domain" description="Extracellular" evidence="2">
    <location>
        <begin position="276"/>
        <end position="310"/>
    </location>
</feature>
<feature type="transmembrane region" description="Helical; Name=6" evidence="2">
    <location>
        <begin position="311"/>
        <end position="331"/>
    </location>
</feature>
<feature type="topological domain" description="Cytoplasmic" evidence="2">
    <location>
        <begin position="332"/>
        <end position="335"/>
    </location>
</feature>
<feature type="transmembrane region" description="Helical; Name=7" evidence="2">
    <location>
        <begin position="336"/>
        <end position="356"/>
    </location>
</feature>
<feature type="topological domain" description="Extracellular" evidence="2">
    <location>
        <begin position="357"/>
        <end position="375"/>
    </location>
</feature>
<feature type="transmembrane region" description="Helical; Name=8" evidence="2">
    <location>
        <begin position="376"/>
        <end position="396"/>
    </location>
</feature>
<feature type="topological domain" description="Cytoplasmic" evidence="2">
    <location>
        <begin position="397"/>
        <end position="434"/>
    </location>
</feature>
<feature type="transmembrane region" description="Helical; Name=9" evidence="2">
    <location>
        <begin position="435"/>
        <end position="455"/>
    </location>
</feature>
<feature type="topological domain" description="Extracellular" evidence="2">
    <location>
        <begin position="456"/>
        <end position="459"/>
    </location>
</feature>
<feature type="transmembrane region" description="Helical; Name=10" evidence="2">
    <location>
        <begin position="460"/>
        <end position="480"/>
    </location>
</feature>
<feature type="topological domain" description="Cytoplasmic" evidence="2">
    <location>
        <begin position="481"/>
        <end position="482"/>
    </location>
</feature>
<feature type="transmembrane region" description="Helical; Name=11" evidence="2">
    <location>
        <begin position="483"/>
        <end position="503"/>
    </location>
</feature>
<feature type="topological domain" description="Extracellular" evidence="2">
    <location>
        <begin position="504"/>
        <end position="515"/>
    </location>
</feature>
<feature type="transmembrane region" description="Helical; Name=12" evidence="2">
    <location>
        <begin position="516"/>
        <end position="536"/>
    </location>
</feature>
<feature type="topological domain" description="Cytoplasmic" evidence="2">
    <location>
        <begin position="537"/>
        <end position="811"/>
    </location>
</feature>
<reference key="1">
    <citation type="journal article" date="2005" name="Genome Res.">
        <title>Sequence, annotation, and analysis of synteny between rice chromosome 3 and diverged grass species.</title>
        <authorList>
            <consortium name="The rice chromosome 3 sequencing consortium"/>
            <person name="Buell C.R."/>
            <person name="Yuan Q."/>
            <person name="Ouyang S."/>
            <person name="Liu J."/>
            <person name="Zhu W."/>
            <person name="Wang A."/>
            <person name="Maiti R."/>
            <person name="Haas B."/>
            <person name="Wortman J."/>
            <person name="Pertea M."/>
            <person name="Jones K.M."/>
            <person name="Kim M."/>
            <person name="Overton L."/>
            <person name="Tsitrin T."/>
            <person name="Fadrosh D."/>
            <person name="Bera J."/>
            <person name="Weaver B."/>
            <person name="Jin S."/>
            <person name="Johri S."/>
            <person name="Reardon M."/>
            <person name="Webb K."/>
            <person name="Hill J."/>
            <person name="Moffat K."/>
            <person name="Tallon L."/>
            <person name="Van Aken S."/>
            <person name="Lewis M."/>
            <person name="Utterback T."/>
            <person name="Feldblyum T."/>
            <person name="Zismann V."/>
            <person name="Iobst S."/>
            <person name="Hsiao J."/>
            <person name="de Vazeille A.R."/>
            <person name="Salzberg S.L."/>
            <person name="White O."/>
            <person name="Fraser C.M."/>
            <person name="Yu Y."/>
            <person name="Kim H."/>
            <person name="Rambo T."/>
            <person name="Currie J."/>
            <person name="Collura K."/>
            <person name="Kernodle-Thompson S."/>
            <person name="Wei F."/>
            <person name="Kudrna K."/>
            <person name="Ammiraju J.S.S."/>
            <person name="Luo M."/>
            <person name="Goicoechea J.L."/>
            <person name="Wing R.A."/>
            <person name="Henry D."/>
            <person name="Oates R."/>
            <person name="Palmer M."/>
            <person name="Pries G."/>
            <person name="Saski C."/>
            <person name="Simmons J."/>
            <person name="Soderlund C."/>
            <person name="Nelson W."/>
            <person name="de la Bastide M."/>
            <person name="Spiegel L."/>
            <person name="Nascimento L."/>
            <person name="Huang E."/>
            <person name="Preston R."/>
            <person name="Zutavern T."/>
            <person name="Palmer L."/>
            <person name="O'Shaughnessy A."/>
            <person name="Dike S."/>
            <person name="McCombie W.R."/>
            <person name="Minx P."/>
            <person name="Cordum H."/>
            <person name="Wilson R."/>
            <person name="Jin W."/>
            <person name="Lee H.R."/>
            <person name="Jiang J."/>
            <person name="Jackson S."/>
        </authorList>
    </citation>
    <scope>NUCLEOTIDE SEQUENCE [LARGE SCALE GENOMIC DNA]</scope>
    <source>
        <strain>cv. Nipponbare</strain>
    </source>
</reference>
<reference key="2">
    <citation type="journal article" date="2005" name="Nature">
        <title>The map-based sequence of the rice genome.</title>
        <authorList>
            <consortium name="International rice genome sequencing project (IRGSP)"/>
        </authorList>
    </citation>
    <scope>NUCLEOTIDE SEQUENCE [LARGE SCALE GENOMIC DNA]</scope>
    <source>
        <strain>cv. Nipponbare</strain>
    </source>
</reference>
<reference key="3">
    <citation type="journal article" date="2008" name="Nucleic Acids Res.">
        <title>The rice annotation project database (RAP-DB): 2008 update.</title>
        <authorList>
            <consortium name="The rice annotation project (RAP)"/>
        </authorList>
    </citation>
    <scope>GENOME REANNOTATION</scope>
    <source>
        <strain>cv. Nipponbare</strain>
    </source>
</reference>
<reference key="4">
    <citation type="journal article" date="2013" name="Rice">
        <title>Improvement of the Oryza sativa Nipponbare reference genome using next generation sequence and optical map data.</title>
        <authorList>
            <person name="Kawahara Y."/>
            <person name="de la Bastide M."/>
            <person name="Hamilton J.P."/>
            <person name="Kanamori H."/>
            <person name="McCombie W.R."/>
            <person name="Ouyang S."/>
            <person name="Schwartz D.C."/>
            <person name="Tanaka T."/>
            <person name="Wu J."/>
            <person name="Zhou S."/>
            <person name="Childs K.L."/>
            <person name="Davidson R.M."/>
            <person name="Lin H."/>
            <person name="Quesada-Ocampo L."/>
            <person name="Vaillancourt B."/>
            <person name="Sakai H."/>
            <person name="Lee S.S."/>
            <person name="Kim J."/>
            <person name="Numa H."/>
            <person name="Itoh T."/>
            <person name="Buell C.R."/>
            <person name="Matsumoto T."/>
        </authorList>
    </citation>
    <scope>GENOME REANNOTATION</scope>
    <source>
        <strain>cv. Nipponbare</strain>
    </source>
</reference>
<reference key="5">
    <citation type="journal article" date="2003" name="Science">
        <title>Collection, mapping, and annotation of over 28,000 cDNA clones from japonica rice.</title>
        <authorList>
            <consortium name="The rice full-length cDNA consortium"/>
        </authorList>
    </citation>
    <scope>NUCLEOTIDE SEQUENCE [LARGE SCALE MRNA]</scope>
    <source>
        <strain>cv. Nipponbare</strain>
    </source>
</reference>
<reference key="6">
    <citation type="journal article" date="2009" name="J. Genet. Genomics">
        <title>Molecular evolution and functional divergence of HAK potassium transporter gene family in rice (Oryza sativa L.).</title>
        <authorList>
            <person name="Yang Z."/>
            <person name="Gao Q."/>
            <person name="Sun C."/>
            <person name="Li W."/>
            <person name="Gu S."/>
            <person name="Xu C."/>
        </authorList>
    </citation>
    <scope>GENE FAMILY</scope>
</reference>
<protein>
    <recommendedName>
        <fullName>Potassium transporter 27</fullName>
    </recommendedName>
    <alternativeName>
        <fullName>OsHAK27</fullName>
    </alternativeName>
</protein>
<proteinExistence type="evidence at transcript level"/>
<sequence length="811" mass="91810">MGDDVLGRGSRRDQEIVLVDIVDDDDHDDVPAVRRQDSLYVDATRAGGANHRGGQEESWARTLKLAFQCVGILYGDIGTSPLFVYSSTFKDGVRHPDDLLGALSLIIYSFALFTIVKYVFIALRANDDGDGGTFALYTLISRHAKVSLIPNQQAEDELISKYNTGKPQATLRRARWMKELLETNRAVKIWLFLLTILATAMVISDAVLTPAISVLSAVGGLKEKAPNLTTDEIVWITVATLVVLFAIQRFGTDKIGYLFAPIILLWLLLIGCVGIYNTIKFDTGVLRAFNLKYIIDYFRRNKKDGWISLSGILLCFTGTEALFSDLGYFSIRSIQLSFSFGLVPSVLLAYIGQAAYLREHPEHIANTFYRSTPNVMFWPTFILAVAASIIGSQAMISCAFATISHLQTLNCFPRVKILHTSRQYSGQLYIPEVNFLLCVGACLVTIGFKTTVIIGEAHAICVVFVMIITTLLLTIVMLLVWKVSIWYVALFFIVFMSSESIYLSAVLYQFVHGEYVPVAMSVFLMIVMTVWHYVHVKRYEFELEHTVPRDKVKELLERRDIQRVPGVGLFYTDLVQGIPPVFPHLIEKIPSIHSVLIFVSIKHLPIPSVDRSERFIFRHVDKEEYKVFQCVARYGYRDPMEEAKDFVDALTENLQYYIRDVNFYTTGGDQHIFRSTSYASSIAESFASYEKHSGHAVYAEEMLTPAESFSEHTKQLSGRSKHFKQFQVENMNMQKMEKVQQEQQAILREMENGVVYILGESDIVASPHSSLLNKIIVNYIYSFLRKNCRNGEKMLSIPRSQVLKVGIAYEI</sequence>
<evidence type="ECO:0000250" key="1"/>
<evidence type="ECO:0000255" key="2"/>
<evidence type="ECO:0000305" key="3"/>
<name>HAK27_ORYSJ</name>
<accession>Q84MS4</accession>
<accession>A0A0P0VZK3</accession>
<dbReference type="EMBL" id="AC134887">
    <property type="protein sequence ID" value="AAP12968.1"/>
    <property type="molecule type" value="Genomic_DNA"/>
</dbReference>
<dbReference type="EMBL" id="DP000009">
    <property type="protein sequence ID" value="ABF97239.1"/>
    <property type="molecule type" value="Genomic_DNA"/>
</dbReference>
<dbReference type="EMBL" id="AP008209">
    <property type="protein sequence ID" value="BAF12443.1"/>
    <property type="molecule type" value="Genomic_DNA"/>
</dbReference>
<dbReference type="EMBL" id="AP014959">
    <property type="protein sequence ID" value="BAS85014.1"/>
    <property type="molecule type" value="Genomic_DNA"/>
</dbReference>
<dbReference type="EMBL" id="AK068853">
    <property type="protein sequence ID" value="BAG91126.1"/>
    <property type="molecule type" value="mRNA"/>
</dbReference>
<dbReference type="RefSeq" id="XP_015628039.1">
    <property type="nucleotide sequence ID" value="XM_015772553.1"/>
</dbReference>
<dbReference type="FunCoup" id="Q84MS4">
    <property type="interactions" value="26"/>
</dbReference>
<dbReference type="STRING" id="39947.Q84MS4"/>
<dbReference type="PaxDb" id="39947-Q84MS4"/>
<dbReference type="EnsemblPlants" id="Os03t0574900-01">
    <property type="protein sequence ID" value="Os03t0574900-01"/>
    <property type="gene ID" value="Os03g0574900"/>
</dbReference>
<dbReference type="Gramene" id="Os03t0574900-01">
    <property type="protein sequence ID" value="Os03t0574900-01"/>
    <property type="gene ID" value="Os03g0574900"/>
</dbReference>
<dbReference type="KEGG" id="dosa:Os03g0574900"/>
<dbReference type="eggNOG" id="ENOG502QPSA">
    <property type="taxonomic scope" value="Eukaryota"/>
</dbReference>
<dbReference type="HOGENOM" id="CLU_008142_2_2_1"/>
<dbReference type="InParanoid" id="Q84MS4"/>
<dbReference type="OMA" id="IIGEAHA"/>
<dbReference type="OrthoDB" id="504708at2759"/>
<dbReference type="Proteomes" id="UP000000763">
    <property type="component" value="Chromosome 3"/>
</dbReference>
<dbReference type="Proteomes" id="UP000059680">
    <property type="component" value="Chromosome 3"/>
</dbReference>
<dbReference type="GO" id="GO:0016020">
    <property type="term" value="C:membrane"/>
    <property type="evidence" value="ECO:0000318"/>
    <property type="project" value="GO_Central"/>
</dbReference>
<dbReference type="GO" id="GO:0015079">
    <property type="term" value="F:potassium ion transmembrane transporter activity"/>
    <property type="evidence" value="ECO:0000318"/>
    <property type="project" value="GO_Central"/>
</dbReference>
<dbReference type="GO" id="GO:0006813">
    <property type="term" value="P:potassium ion transport"/>
    <property type="evidence" value="ECO:0000318"/>
    <property type="project" value="GO_Central"/>
</dbReference>
<dbReference type="InterPro" id="IPR003855">
    <property type="entry name" value="K+_transporter"/>
</dbReference>
<dbReference type="InterPro" id="IPR053952">
    <property type="entry name" value="K_trans_C"/>
</dbReference>
<dbReference type="InterPro" id="IPR053951">
    <property type="entry name" value="K_trans_N"/>
</dbReference>
<dbReference type="NCBIfam" id="TIGR00794">
    <property type="entry name" value="kup"/>
    <property type="match status" value="1"/>
</dbReference>
<dbReference type="PANTHER" id="PTHR30540">
    <property type="entry name" value="OSMOTIC STRESS POTASSIUM TRANSPORTER"/>
    <property type="match status" value="1"/>
</dbReference>
<dbReference type="PANTHER" id="PTHR30540:SF112">
    <property type="entry name" value="POTASSIUM TRANSPORTER 27"/>
    <property type="match status" value="1"/>
</dbReference>
<dbReference type="Pfam" id="PF02705">
    <property type="entry name" value="K_trans"/>
    <property type="match status" value="1"/>
</dbReference>
<dbReference type="Pfam" id="PF22776">
    <property type="entry name" value="K_trans_C"/>
    <property type="match status" value="1"/>
</dbReference>
<keyword id="KW-0406">Ion transport</keyword>
<keyword id="KW-0472">Membrane</keyword>
<keyword id="KW-0630">Potassium</keyword>
<keyword id="KW-0633">Potassium transport</keyword>
<keyword id="KW-1185">Reference proteome</keyword>
<keyword id="KW-0812">Transmembrane</keyword>
<keyword id="KW-1133">Transmembrane helix</keyword>
<keyword id="KW-0813">Transport</keyword>